<feature type="chain" id="PRO_0000163681" description="1-deoxy-D-xylulose 5-phosphate reductoisomerase">
    <location>
        <begin position="1"/>
        <end position="394"/>
    </location>
</feature>
<feature type="binding site" evidence="1">
    <location>
        <position position="12"/>
    </location>
    <ligand>
        <name>NADPH</name>
        <dbReference type="ChEBI" id="CHEBI:57783"/>
    </ligand>
</feature>
<feature type="binding site" evidence="1">
    <location>
        <position position="13"/>
    </location>
    <ligand>
        <name>NADPH</name>
        <dbReference type="ChEBI" id="CHEBI:57783"/>
    </ligand>
</feature>
<feature type="binding site" evidence="1">
    <location>
        <position position="14"/>
    </location>
    <ligand>
        <name>NADPH</name>
        <dbReference type="ChEBI" id="CHEBI:57783"/>
    </ligand>
</feature>
<feature type="binding site" evidence="1">
    <location>
        <position position="15"/>
    </location>
    <ligand>
        <name>NADPH</name>
        <dbReference type="ChEBI" id="CHEBI:57783"/>
    </ligand>
</feature>
<feature type="binding site" evidence="1">
    <location>
        <position position="39"/>
    </location>
    <ligand>
        <name>NADPH</name>
        <dbReference type="ChEBI" id="CHEBI:57783"/>
    </ligand>
</feature>
<feature type="binding site" evidence="1">
    <location>
        <position position="40"/>
    </location>
    <ligand>
        <name>NADPH</name>
        <dbReference type="ChEBI" id="CHEBI:57783"/>
    </ligand>
</feature>
<feature type="binding site" evidence="1">
    <location>
        <position position="126"/>
    </location>
    <ligand>
        <name>NADPH</name>
        <dbReference type="ChEBI" id="CHEBI:57783"/>
    </ligand>
</feature>
<feature type="binding site" evidence="1">
    <location>
        <position position="127"/>
    </location>
    <ligand>
        <name>1-deoxy-D-xylulose 5-phosphate</name>
        <dbReference type="ChEBI" id="CHEBI:57792"/>
    </ligand>
</feature>
<feature type="binding site" evidence="1">
    <location>
        <position position="128"/>
    </location>
    <ligand>
        <name>NADPH</name>
        <dbReference type="ChEBI" id="CHEBI:57783"/>
    </ligand>
</feature>
<feature type="binding site" evidence="1">
    <location>
        <position position="152"/>
    </location>
    <ligand>
        <name>Mn(2+)</name>
        <dbReference type="ChEBI" id="CHEBI:29035"/>
    </ligand>
</feature>
<feature type="binding site" evidence="1">
    <location>
        <position position="153"/>
    </location>
    <ligand>
        <name>1-deoxy-D-xylulose 5-phosphate</name>
        <dbReference type="ChEBI" id="CHEBI:57792"/>
    </ligand>
</feature>
<feature type="binding site" evidence="1">
    <location>
        <position position="154"/>
    </location>
    <ligand>
        <name>1-deoxy-D-xylulose 5-phosphate</name>
        <dbReference type="ChEBI" id="CHEBI:57792"/>
    </ligand>
</feature>
<feature type="binding site" evidence="1">
    <location>
        <position position="154"/>
    </location>
    <ligand>
        <name>Mn(2+)</name>
        <dbReference type="ChEBI" id="CHEBI:29035"/>
    </ligand>
</feature>
<feature type="binding site" evidence="1">
    <location>
        <position position="183"/>
    </location>
    <ligand>
        <name>1-deoxy-D-xylulose 5-phosphate</name>
        <dbReference type="ChEBI" id="CHEBI:57792"/>
    </ligand>
</feature>
<feature type="binding site" evidence="1">
    <location>
        <position position="206"/>
    </location>
    <ligand>
        <name>1-deoxy-D-xylulose 5-phosphate</name>
        <dbReference type="ChEBI" id="CHEBI:57792"/>
    </ligand>
</feature>
<feature type="binding site" evidence="1">
    <location>
        <position position="212"/>
    </location>
    <ligand>
        <name>NADPH</name>
        <dbReference type="ChEBI" id="CHEBI:57783"/>
    </ligand>
</feature>
<feature type="binding site" evidence="1">
    <location>
        <position position="219"/>
    </location>
    <ligand>
        <name>1-deoxy-D-xylulose 5-phosphate</name>
        <dbReference type="ChEBI" id="CHEBI:57792"/>
    </ligand>
</feature>
<feature type="binding site" evidence="1">
    <location>
        <position position="224"/>
    </location>
    <ligand>
        <name>1-deoxy-D-xylulose 5-phosphate</name>
        <dbReference type="ChEBI" id="CHEBI:57792"/>
    </ligand>
</feature>
<feature type="binding site" evidence="1">
    <location>
        <position position="225"/>
    </location>
    <ligand>
        <name>1-deoxy-D-xylulose 5-phosphate</name>
        <dbReference type="ChEBI" id="CHEBI:57792"/>
    </ligand>
</feature>
<feature type="binding site" evidence="1">
    <location>
        <position position="228"/>
    </location>
    <ligand>
        <name>1-deoxy-D-xylulose 5-phosphate</name>
        <dbReference type="ChEBI" id="CHEBI:57792"/>
    </ligand>
</feature>
<feature type="binding site" evidence="1">
    <location>
        <position position="228"/>
    </location>
    <ligand>
        <name>Mn(2+)</name>
        <dbReference type="ChEBI" id="CHEBI:29035"/>
    </ligand>
</feature>
<name>DXR_NEIG1</name>
<protein>
    <recommendedName>
        <fullName evidence="1">1-deoxy-D-xylulose 5-phosphate reductoisomerase</fullName>
        <shortName evidence="1">DXP reductoisomerase</shortName>
        <ecNumber evidence="1">1.1.1.267</ecNumber>
    </recommendedName>
    <alternativeName>
        <fullName evidence="1">1-deoxyxylulose-5-phosphate reductoisomerase</fullName>
    </alternativeName>
    <alternativeName>
        <fullName evidence="1">2-C-methyl-D-erythritol 4-phosphate synthase</fullName>
    </alternativeName>
</protein>
<sequence length="394" mass="42023">MTPQVLTILGSTGSIGESTLDVVSRHPEKFRVFALAGHKQVEKLAAQCQTFRPEYAVVADAEHAARLEALLKRDGTATQVLHGAQALVDVASADEVSGVMCAIVGAAGLPSALAAAQKGKTIYLANKETLVVSGALFMETARANGAAVLPVDSEHNAIFQVLPRDYTDRLNEHGIDSIILTASGGPFLTTDLSTFDSITPEQAVKHPNWRMGRKISVDSATMANKGLELIEAHWLFNCPPDKLEVVIHPQSVIHSMVRYRDGSVLAQLGNPDMRTPIAYCLGLPERIDSGVGKLDFGALSALTFQKPDFGRFPCLKFAYETINAGGAAPCVLNAANETAVAAFLDGQIKFTDIAKTVAHCLAQDFSNGMGDIEGLLAQDARTRAQARAFIGTLR</sequence>
<comment type="function">
    <text evidence="1">Catalyzes the NADPH-dependent rearrangement and reduction of 1-deoxy-D-xylulose-5-phosphate (DXP) to 2-C-methyl-D-erythritol 4-phosphate (MEP).</text>
</comment>
<comment type="catalytic activity">
    <reaction evidence="1">
        <text>2-C-methyl-D-erythritol 4-phosphate + NADP(+) = 1-deoxy-D-xylulose 5-phosphate + NADPH + H(+)</text>
        <dbReference type="Rhea" id="RHEA:13717"/>
        <dbReference type="ChEBI" id="CHEBI:15378"/>
        <dbReference type="ChEBI" id="CHEBI:57783"/>
        <dbReference type="ChEBI" id="CHEBI:57792"/>
        <dbReference type="ChEBI" id="CHEBI:58262"/>
        <dbReference type="ChEBI" id="CHEBI:58349"/>
        <dbReference type="EC" id="1.1.1.267"/>
    </reaction>
    <physiologicalReaction direction="right-to-left" evidence="1">
        <dbReference type="Rhea" id="RHEA:13719"/>
    </physiologicalReaction>
</comment>
<comment type="cofactor">
    <cofactor evidence="1">
        <name>Mg(2+)</name>
        <dbReference type="ChEBI" id="CHEBI:18420"/>
    </cofactor>
    <cofactor evidence="1">
        <name>Mn(2+)</name>
        <dbReference type="ChEBI" id="CHEBI:29035"/>
    </cofactor>
</comment>
<comment type="pathway">
    <text evidence="1">Isoprenoid biosynthesis; isopentenyl diphosphate biosynthesis via DXP pathway; isopentenyl diphosphate from 1-deoxy-D-xylulose 5-phosphate: step 1/6.</text>
</comment>
<comment type="similarity">
    <text evidence="1">Belongs to the DXR family.</text>
</comment>
<accession>Q5F5X0</accession>
<proteinExistence type="inferred from homology"/>
<dbReference type="EC" id="1.1.1.267" evidence="1"/>
<dbReference type="EMBL" id="AE004969">
    <property type="protein sequence ID" value="AAW90417.1"/>
    <property type="molecule type" value="Genomic_DNA"/>
</dbReference>
<dbReference type="RefSeq" id="YP_208829.1">
    <property type="nucleotide sequence ID" value="NC_002946.2"/>
</dbReference>
<dbReference type="SMR" id="Q5F5X0"/>
<dbReference type="STRING" id="242231.NGO_1799"/>
<dbReference type="KEGG" id="ngo:NGO_1799"/>
<dbReference type="PATRIC" id="fig|242231.10.peg.2159"/>
<dbReference type="HOGENOM" id="CLU_035714_4_0_4"/>
<dbReference type="UniPathway" id="UPA00056">
    <property type="reaction ID" value="UER00092"/>
</dbReference>
<dbReference type="Proteomes" id="UP000000535">
    <property type="component" value="Chromosome"/>
</dbReference>
<dbReference type="GO" id="GO:0030604">
    <property type="term" value="F:1-deoxy-D-xylulose-5-phosphate reductoisomerase activity"/>
    <property type="evidence" value="ECO:0007669"/>
    <property type="project" value="UniProtKB-UniRule"/>
</dbReference>
<dbReference type="GO" id="GO:0030145">
    <property type="term" value="F:manganese ion binding"/>
    <property type="evidence" value="ECO:0007669"/>
    <property type="project" value="TreeGrafter"/>
</dbReference>
<dbReference type="GO" id="GO:0070402">
    <property type="term" value="F:NADPH binding"/>
    <property type="evidence" value="ECO:0007669"/>
    <property type="project" value="InterPro"/>
</dbReference>
<dbReference type="GO" id="GO:0051484">
    <property type="term" value="P:isopentenyl diphosphate biosynthetic process, methylerythritol 4-phosphate pathway involved in terpenoid biosynthetic process"/>
    <property type="evidence" value="ECO:0007669"/>
    <property type="project" value="TreeGrafter"/>
</dbReference>
<dbReference type="FunFam" id="3.40.50.720:FF:000045">
    <property type="entry name" value="1-deoxy-D-xylulose 5-phosphate reductoisomerase"/>
    <property type="match status" value="1"/>
</dbReference>
<dbReference type="Gene3D" id="1.10.1740.10">
    <property type="match status" value="1"/>
</dbReference>
<dbReference type="Gene3D" id="3.40.50.720">
    <property type="entry name" value="NAD(P)-binding Rossmann-like Domain"/>
    <property type="match status" value="1"/>
</dbReference>
<dbReference type="HAMAP" id="MF_00183">
    <property type="entry name" value="DXP_reductoisom"/>
    <property type="match status" value="1"/>
</dbReference>
<dbReference type="InterPro" id="IPR003821">
    <property type="entry name" value="DXP_reductoisomerase"/>
</dbReference>
<dbReference type="InterPro" id="IPR013644">
    <property type="entry name" value="DXP_reductoisomerase_C"/>
</dbReference>
<dbReference type="InterPro" id="IPR013512">
    <property type="entry name" value="DXP_reductoisomerase_N"/>
</dbReference>
<dbReference type="InterPro" id="IPR026877">
    <property type="entry name" value="DXPR_C"/>
</dbReference>
<dbReference type="InterPro" id="IPR036169">
    <property type="entry name" value="DXPR_C_sf"/>
</dbReference>
<dbReference type="InterPro" id="IPR036291">
    <property type="entry name" value="NAD(P)-bd_dom_sf"/>
</dbReference>
<dbReference type="NCBIfam" id="TIGR00243">
    <property type="entry name" value="Dxr"/>
    <property type="match status" value="1"/>
</dbReference>
<dbReference type="NCBIfam" id="NF003938">
    <property type="entry name" value="PRK05447.1-1"/>
    <property type="match status" value="1"/>
</dbReference>
<dbReference type="NCBIfam" id="NF009114">
    <property type="entry name" value="PRK12464.1"/>
    <property type="match status" value="1"/>
</dbReference>
<dbReference type="PANTHER" id="PTHR30525">
    <property type="entry name" value="1-DEOXY-D-XYLULOSE 5-PHOSPHATE REDUCTOISOMERASE"/>
    <property type="match status" value="1"/>
</dbReference>
<dbReference type="PANTHER" id="PTHR30525:SF0">
    <property type="entry name" value="1-DEOXY-D-XYLULOSE 5-PHOSPHATE REDUCTOISOMERASE, CHLOROPLASTIC"/>
    <property type="match status" value="1"/>
</dbReference>
<dbReference type="Pfam" id="PF08436">
    <property type="entry name" value="DXP_redisom_C"/>
    <property type="match status" value="1"/>
</dbReference>
<dbReference type="Pfam" id="PF02670">
    <property type="entry name" value="DXP_reductoisom"/>
    <property type="match status" value="1"/>
</dbReference>
<dbReference type="Pfam" id="PF13288">
    <property type="entry name" value="DXPR_C"/>
    <property type="match status" value="1"/>
</dbReference>
<dbReference type="PIRSF" id="PIRSF006205">
    <property type="entry name" value="Dxp_reductismrs"/>
    <property type="match status" value="1"/>
</dbReference>
<dbReference type="SUPFAM" id="SSF69055">
    <property type="entry name" value="1-deoxy-D-xylulose-5-phosphate reductoisomerase, C-terminal domain"/>
    <property type="match status" value="1"/>
</dbReference>
<dbReference type="SUPFAM" id="SSF55347">
    <property type="entry name" value="Glyceraldehyde-3-phosphate dehydrogenase-like, C-terminal domain"/>
    <property type="match status" value="1"/>
</dbReference>
<dbReference type="SUPFAM" id="SSF51735">
    <property type="entry name" value="NAD(P)-binding Rossmann-fold domains"/>
    <property type="match status" value="1"/>
</dbReference>
<keyword id="KW-0414">Isoprene biosynthesis</keyword>
<keyword id="KW-0464">Manganese</keyword>
<keyword id="KW-0479">Metal-binding</keyword>
<keyword id="KW-0521">NADP</keyword>
<keyword id="KW-0560">Oxidoreductase</keyword>
<keyword id="KW-1185">Reference proteome</keyword>
<evidence type="ECO:0000255" key="1">
    <source>
        <dbReference type="HAMAP-Rule" id="MF_00183"/>
    </source>
</evidence>
<organism>
    <name type="scientific">Neisseria gonorrhoeae (strain ATCC 700825 / FA 1090)</name>
    <dbReference type="NCBI Taxonomy" id="242231"/>
    <lineage>
        <taxon>Bacteria</taxon>
        <taxon>Pseudomonadati</taxon>
        <taxon>Pseudomonadota</taxon>
        <taxon>Betaproteobacteria</taxon>
        <taxon>Neisseriales</taxon>
        <taxon>Neisseriaceae</taxon>
        <taxon>Neisseria</taxon>
    </lineage>
</organism>
<gene>
    <name evidence="1" type="primary">dxr</name>
    <name type="ordered locus">NGO_1799</name>
</gene>
<reference key="1">
    <citation type="submission" date="2003-03" db="EMBL/GenBank/DDBJ databases">
        <title>The complete genome sequence of Neisseria gonorrhoeae.</title>
        <authorList>
            <person name="Lewis L.A."/>
            <person name="Gillaspy A.F."/>
            <person name="McLaughlin R.E."/>
            <person name="Gipson M."/>
            <person name="Ducey T.F."/>
            <person name="Ownbey T."/>
            <person name="Hartman K."/>
            <person name="Nydick C."/>
            <person name="Carson M.B."/>
            <person name="Vaughn J."/>
            <person name="Thomson C."/>
            <person name="Song L."/>
            <person name="Lin S."/>
            <person name="Yuan X."/>
            <person name="Najar F."/>
            <person name="Zhan M."/>
            <person name="Ren Q."/>
            <person name="Zhu H."/>
            <person name="Qi S."/>
            <person name="Kenton S.M."/>
            <person name="Lai H."/>
            <person name="White J.D."/>
            <person name="Clifton S."/>
            <person name="Roe B.A."/>
            <person name="Dyer D.W."/>
        </authorList>
    </citation>
    <scope>NUCLEOTIDE SEQUENCE [LARGE SCALE GENOMIC DNA]</scope>
    <source>
        <strain>ATCC 700825 / FA 1090</strain>
    </source>
</reference>